<organism>
    <name type="scientific">Homo sapiens</name>
    <name type="common">Human</name>
    <dbReference type="NCBI Taxonomy" id="9606"/>
    <lineage>
        <taxon>Eukaryota</taxon>
        <taxon>Metazoa</taxon>
        <taxon>Chordata</taxon>
        <taxon>Craniata</taxon>
        <taxon>Vertebrata</taxon>
        <taxon>Euteleostomi</taxon>
        <taxon>Mammalia</taxon>
        <taxon>Eutheria</taxon>
        <taxon>Euarchontoglires</taxon>
        <taxon>Primates</taxon>
        <taxon>Haplorrhini</taxon>
        <taxon>Catarrhini</taxon>
        <taxon>Hominidae</taxon>
        <taxon>Homo</taxon>
    </lineage>
</organism>
<dbReference type="EMBL" id="AB103478">
    <property type="protein sequence ID" value="BAD16631.1"/>
    <property type="molecule type" value="mRNA"/>
</dbReference>
<dbReference type="EMBL" id="AK091444">
    <property type="protein sequence ID" value="BAC03666.1"/>
    <property type="status" value="ALT_INIT"/>
    <property type="molecule type" value="mRNA"/>
</dbReference>
<dbReference type="EMBL" id="AK127016">
    <property type="protein sequence ID" value="BAG54423.1"/>
    <property type="molecule type" value="mRNA"/>
</dbReference>
<dbReference type="EMBL" id="U52111">
    <property type="status" value="NOT_ANNOTATED_CDS"/>
    <property type="molecule type" value="Genomic_DNA"/>
</dbReference>
<dbReference type="EMBL" id="CH471172">
    <property type="protein sequence ID" value="EAW72805.1"/>
    <property type="molecule type" value="Genomic_DNA"/>
</dbReference>
<dbReference type="EMBL" id="BC002606">
    <property type="protein sequence ID" value="AAH02606.2"/>
    <property type="molecule type" value="mRNA"/>
</dbReference>
<dbReference type="EMBL" id="BC080584">
    <property type="protein sequence ID" value="AAH80584.1"/>
    <property type="molecule type" value="mRNA"/>
</dbReference>
<dbReference type="EMBL" id="BC143459">
    <property type="protein sequence ID" value="AAI43460.1"/>
    <property type="molecule type" value="mRNA"/>
</dbReference>
<dbReference type="EMBL" id="AB040877">
    <property type="protein sequence ID" value="BAA95968.1"/>
    <property type="molecule type" value="mRNA"/>
</dbReference>
<dbReference type="CCDS" id="CCDS14732.1">
    <molecule id="Q76G19-1"/>
</dbReference>
<dbReference type="CCDS" id="CCDS78517.1">
    <molecule id="Q76G19-2"/>
</dbReference>
<dbReference type="RefSeq" id="NP_001290441.1">
    <property type="nucleotide sequence ID" value="NM_001303512.1"/>
</dbReference>
<dbReference type="RefSeq" id="NP_001290442.1">
    <property type="nucleotide sequence ID" value="NM_001303513.1"/>
</dbReference>
<dbReference type="RefSeq" id="NP_001290443.1">
    <molecule id="Q76G19-2"/>
    <property type="nucleotide sequence ID" value="NM_001303514.2"/>
</dbReference>
<dbReference type="RefSeq" id="NP_001290444.1">
    <property type="nucleotide sequence ID" value="NM_001303515.1"/>
</dbReference>
<dbReference type="RefSeq" id="NP_001290445.1">
    <property type="nucleotide sequence ID" value="NM_001303516.1"/>
</dbReference>
<dbReference type="RefSeq" id="NP_115901.2">
    <molecule id="Q76G19-1"/>
    <property type="nucleotide sequence ID" value="NM_032512.3"/>
</dbReference>
<dbReference type="SMR" id="Q76G19"/>
<dbReference type="BioGRID" id="121646">
    <property type="interactions" value="18"/>
</dbReference>
<dbReference type="FunCoup" id="Q76G19">
    <property type="interactions" value="191"/>
</dbReference>
<dbReference type="IntAct" id="Q76G19">
    <property type="interactions" value="6"/>
</dbReference>
<dbReference type="MINT" id="Q76G19"/>
<dbReference type="STRING" id="9606.ENSP00000377355"/>
<dbReference type="GlyGen" id="Q76G19">
    <property type="glycosylation" value="1 site"/>
</dbReference>
<dbReference type="iPTMnet" id="Q76G19"/>
<dbReference type="PhosphoSitePlus" id="Q76G19"/>
<dbReference type="BioMuta" id="PDZD4"/>
<dbReference type="DMDM" id="62288846"/>
<dbReference type="jPOST" id="Q76G19"/>
<dbReference type="MassIVE" id="Q76G19"/>
<dbReference type="PaxDb" id="9606-ENSP00000164640"/>
<dbReference type="PeptideAtlas" id="Q76G19"/>
<dbReference type="ProteomicsDB" id="68669">
    <molecule id="Q76G19-1"/>
</dbReference>
<dbReference type="ProteomicsDB" id="7201"/>
<dbReference type="Antibodypedia" id="578">
    <property type="antibodies" value="114 antibodies from 18 providers"/>
</dbReference>
<dbReference type="DNASU" id="57595"/>
<dbReference type="Ensembl" id="ENST00000164640.8">
    <molecule id="Q76G19-1"/>
    <property type="protein sequence ID" value="ENSP00000164640.4"/>
    <property type="gene ID" value="ENSG00000067840.13"/>
</dbReference>
<dbReference type="Ensembl" id="ENST00000544474.5">
    <molecule id="Q76G19-2"/>
    <property type="protein sequence ID" value="ENSP00000442033.1"/>
    <property type="gene ID" value="ENSG00000067840.13"/>
</dbReference>
<dbReference type="GeneID" id="57595"/>
<dbReference type="KEGG" id="hsa:57595"/>
<dbReference type="UCSC" id="uc004fiz.2">
    <molecule id="Q76G19-1"/>
    <property type="organism name" value="human"/>
</dbReference>
<dbReference type="AGR" id="HGNC:21167"/>
<dbReference type="CTD" id="57595"/>
<dbReference type="DisGeNET" id="57595"/>
<dbReference type="GeneCards" id="PDZD4"/>
<dbReference type="HGNC" id="HGNC:21167">
    <property type="gene designation" value="PDZD4"/>
</dbReference>
<dbReference type="HPA" id="ENSG00000067840">
    <property type="expression patterns" value="Tissue enriched (brain)"/>
</dbReference>
<dbReference type="MalaCards" id="PDZD4"/>
<dbReference type="MIM" id="300634">
    <property type="type" value="gene"/>
</dbReference>
<dbReference type="neXtProt" id="NX_Q76G19"/>
<dbReference type="OpenTargets" id="ENSG00000067840"/>
<dbReference type="PharmGKB" id="PA134896313"/>
<dbReference type="VEuPathDB" id="HostDB:ENSG00000067840"/>
<dbReference type="eggNOG" id="KOG0312">
    <property type="taxonomic scope" value="Eukaryota"/>
</dbReference>
<dbReference type="GeneTree" id="ENSGT00950000183062"/>
<dbReference type="HOGENOM" id="CLU_011096_1_0_1"/>
<dbReference type="InParanoid" id="Q76G19"/>
<dbReference type="OrthoDB" id="123971at2759"/>
<dbReference type="PAN-GO" id="Q76G19">
    <property type="GO annotations" value="0 GO annotations based on evolutionary models"/>
</dbReference>
<dbReference type="PhylomeDB" id="Q76G19"/>
<dbReference type="TreeFam" id="TF315909"/>
<dbReference type="PathwayCommons" id="Q76G19"/>
<dbReference type="SignaLink" id="Q76G19"/>
<dbReference type="BioGRID-ORCS" id="57595">
    <property type="hits" value="16 hits in 763 CRISPR screens"/>
</dbReference>
<dbReference type="GeneWiki" id="PDZD4"/>
<dbReference type="GenomeRNAi" id="57595"/>
<dbReference type="Pharos" id="Q76G19">
    <property type="development level" value="Tbio"/>
</dbReference>
<dbReference type="PRO" id="PR:Q76G19"/>
<dbReference type="Proteomes" id="UP000005640">
    <property type="component" value="Chromosome X"/>
</dbReference>
<dbReference type="RNAct" id="Q76G19">
    <property type="molecule type" value="protein"/>
</dbReference>
<dbReference type="Bgee" id="ENSG00000067840">
    <property type="expression patterns" value="Expressed in right hemisphere of cerebellum and 144 other cell types or tissues"/>
</dbReference>
<dbReference type="ExpressionAtlas" id="Q76G19">
    <property type="expression patterns" value="baseline and differential"/>
</dbReference>
<dbReference type="GO" id="GO:0005938">
    <property type="term" value="C:cell cortex"/>
    <property type="evidence" value="ECO:0007669"/>
    <property type="project" value="UniProtKB-SubCell"/>
</dbReference>
<dbReference type="CDD" id="cd06716">
    <property type="entry name" value="PDZ2-PDZRN4-like"/>
    <property type="match status" value="1"/>
</dbReference>
<dbReference type="FunFam" id="2.30.42.10:FF:000028">
    <property type="entry name" value="PDZ domain containing ring finger 4"/>
    <property type="match status" value="1"/>
</dbReference>
<dbReference type="Gene3D" id="2.30.42.10">
    <property type="match status" value="1"/>
</dbReference>
<dbReference type="InterPro" id="IPR051971">
    <property type="entry name" value="E3_ubiquitin-PDZ_ligase"/>
</dbReference>
<dbReference type="InterPro" id="IPR001478">
    <property type="entry name" value="PDZ"/>
</dbReference>
<dbReference type="InterPro" id="IPR036034">
    <property type="entry name" value="PDZ_sf"/>
</dbReference>
<dbReference type="PANTHER" id="PTHR15545">
    <property type="entry name" value="PDZ DOMAIN CONTAINING RING FINGER PROTEIN 3, 4"/>
    <property type="match status" value="1"/>
</dbReference>
<dbReference type="PANTHER" id="PTHR15545:SF4">
    <property type="entry name" value="PDZ DOMAIN-CONTAINING PROTEIN 4"/>
    <property type="match status" value="1"/>
</dbReference>
<dbReference type="Pfam" id="PF00595">
    <property type="entry name" value="PDZ"/>
    <property type="match status" value="1"/>
</dbReference>
<dbReference type="SMART" id="SM00228">
    <property type="entry name" value="PDZ"/>
    <property type="match status" value="1"/>
</dbReference>
<dbReference type="SUPFAM" id="SSF50156">
    <property type="entry name" value="PDZ domain-like"/>
    <property type="match status" value="1"/>
</dbReference>
<dbReference type="PROSITE" id="PS50106">
    <property type="entry name" value="PDZ"/>
    <property type="match status" value="1"/>
</dbReference>
<accession>Q76G19</accession>
<accession>B3KXB1</accession>
<accession>B7ZKY3</accession>
<accession>Q8NB75</accession>
<accession>Q9BUH9</accession>
<accession>Q9P284</accession>
<name>PDZD4_HUMAN</name>
<protein>
    <recommendedName>
        <fullName>PDZ domain-containing protein 4</fullName>
    </recommendedName>
    <alternativeName>
        <fullName>PDZ domain-containing RING finger protein 4-like protein</fullName>
    </alternativeName>
</protein>
<comment type="subcellular location">
    <subcellularLocation>
        <location evidence="4">Cytoplasm</location>
        <location evidence="4">Cell cortex</location>
    </subcellularLocation>
    <text>Mainly localized under the plasma membrane.</text>
</comment>
<comment type="alternative products">
    <event type="alternative splicing"/>
    <isoform>
        <id>Q76G19-1</id>
        <name>1</name>
        <sequence type="displayed"/>
    </isoform>
    <isoform>
        <id>Q76G19-2</id>
        <name>2</name>
        <sequence type="described" ref="VSP_054521"/>
    </isoform>
</comment>
<comment type="tissue specificity">
    <text evidence="4">Brain-specific. Expressed in fetal and adult brain. Up-regulated in synovial carcinomas.</text>
</comment>
<comment type="sequence caution" evidence="7">
    <conflict type="erroneous initiation">
        <sequence resource="EMBL-CDS" id="BAC03666"/>
    </conflict>
</comment>
<reference key="1">
    <citation type="journal article" date="2004" name="Oncogene">
        <title>Identification of PDZK4, a novel human gene with PDZ domains, that is upregulated in synovial sarcomas.</title>
        <authorList>
            <person name="Nagayama S."/>
            <person name="Iiizumi M."/>
            <person name="Katagiri T."/>
            <person name="Toguchida J."/>
            <person name="Nakamura Y."/>
        </authorList>
    </citation>
    <scope>NUCLEOTIDE SEQUENCE [MRNA] (ISOFORM 1)</scope>
    <scope>SUBCELLULAR LOCATION</scope>
    <scope>TISSUE SPECIFICITY</scope>
</reference>
<reference key="2">
    <citation type="journal article" date="2004" name="Nat. Genet.">
        <title>Complete sequencing and characterization of 21,243 full-length human cDNAs.</title>
        <authorList>
            <person name="Ota T."/>
            <person name="Suzuki Y."/>
            <person name="Nishikawa T."/>
            <person name="Otsuki T."/>
            <person name="Sugiyama T."/>
            <person name="Irie R."/>
            <person name="Wakamatsu A."/>
            <person name="Hayashi K."/>
            <person name="Sato H."/>
            <person name="Nagai K."/>
            <person name="Kimura K."/>
            <person name="Makita H."/>
            <person name="Sekine M."/>
            <person name="Obayashi M."/>
            <person name="Nishi T."/>
            <person name="Shibahara T."/>
            <person name="Tanaka T."/>
            <person name="Ishii S."/>
            <person name="Yamamoto J."/>
            <person name="Saito K."/>
            <person name="Kawai Y."/>
            <person name="Isono Y."/>
            <person name="Nakamura Y."/>
            <person name="Nagahari K."/>
            <person name="Murakami K."/>
            <person name="Yasuda T."/>
            <person name="Iwayanagi T."/>
            <person name="Wagatsuma M."/>
            <person name="Shiratori A."/>
            <person name="Sudo H."/>
            <person name="Hosoiri T."/>
            <person name="Kaku Y."/>
            <person name="Kodaira H."/>
            <person name="Kondo H."/>
            <person name="Sugawara M."/>
            <person name="Takahashi M."/>
            <person name="Kanda K."/>
            <person name="Yokoi T."/>
            <person name="Furuya T."/>
            <person name="Kikkawa E."/>
            <person name="Omura Y."/>
            <person name="Abe K."/>
            <person name="Kamihara K."/>
            <person name="Katsuta N."/>
            <person name="Sato K."/>
            <person name="Tanikawa M."/>
            <person name="Yamazaki M."/>
            <person name="Ninomiya K."/>
            <person name="Ishibashi T."/>
            <person name="Yamashita H."/>
            <person name="Murakawa K."/>
            <person name="Fujimori K."/>
            <person name="Tanai H."/>
            <person name="Kimata M."/>
            <person name="Watanabe M."/>
            <person name="Hiraoka S."/>
            <person name="Chiba Y."/>
            <person name="Ishida S."/>
            <person name="Ono Y."/>
            <person name="Takiguchi S."/>
            <person name="Watanabe S."/>
            <person name="Yosida M."/>
            <person name="Hotuta T."/>
            <person name="Kusano J."/>
            <person name="Kanehori K."/>
            <person name="Takahashi-Fujii A."/>
            <person name="Hara H."/>
            <person name="Tanase T.-O."/>
            <person name="Nomura Y."/>
            <person name="Togiya S."/>
            <person name="Komai F."/>
            <person name="Hara R."/>
            <person name="Takeuchi K."/>
            <person name="Arita M."/>
            <person name="Imose N."/>
            <person name="Musashino K."/>
            <person name="Yuuki H."/>
            <person name="Oshima A."/>
            <person name="Sasaki N."/>
            <person name="Aotsuka S."/>
            <person name="Yoshikawa Y."/>
            <person name="Matsunawa H."/>
            <person name="Ichihara T."/>
            <person name="Shiohata N."/>
            <person name="Sano S."/>
            <person name="Moriya S."/>
            <person name="Momiyama H."/>
            <person name="Satoh N."/>
            <person name="Takami S."/>
            <person name="Terashima Y."/>
            <person name="Suzuki O."/>
            <person name="Nakagawa S."/>
            <person name="Senoh A."/>
            <person name="Mizoguchi H."/>
            <person name="Goto Y."/>
            <person name="Shimizu F."/>
            <person name="Wakebe H."/>
            <person name="Hishigaki H."/>
            <person name="Watanabe T."/>
            <person name="Sugiyama A."/>
            <person name="Takemoto M."/>
            <person name="Kawakami B."/>
            <person name="Yamazaki M."/>
            <person name="Watanabe K."/>
            <person name="Kumagai A."/>
            <person name="Itakura S."/>
            <person name="Fukuzumi Y."/>
            <person name="Fujimori Y."/>
            <person name="Komiyama M."/>
            <person name="Tashiro H."/>
            <person name="Tanigami A."/>
            <person name="Fujiwara T."/>
            <person name="Ono T."/>
            <person name="Yamada K."/>
            <person name="Fujii Y."/>
            <person name="Ozaki K."/>
            <person name="Hirao M."/>
            <person name="Ohmori Y."/>
            <person name="Kawabata A."/>
            <person name="Hikiji T."/>
            <person name="Kobatake N."/>
            <person name="Inagaki H."/>
            <person name="Ikema Y."/>
            <person name="Okamoto S."/>
            <person name="Okitani R."/>
            <person name="Kawakami T."/>
            <person name="Noguchi S."/>
            <person name="Itoh T."/>
            <person name="Shigeta K."/>
            <person name="Senba T."/>
            <person name="Matsumura K."/>
            <person name="Nakajima Y."/>
            <person name="Mizuno T."/>
            <person name="Morinaga M."/>
            <person name="Sasaki M."/>
            <person name="Togashi T."/>
            <person name="Oyama M."/>
            <person name="Hata H."/>
            <person name="Watanabe M."/>
            <person name="Komatsu T."/>
            <person name="Mizushima-Sugano J."/>
            <person name="Satoh T."/>
            <person name="Shirai Y."/>
            <person name="Takahashi Y."/>
            <person name="Nakagawa K."/>
            <person name="Okumura K."/>
            <person name="Nagase T."/>
            <person name="Nomura N."/>
            <person name="Kikuchi H."/>
            <person name="Masuho Y."/>
            <person name="Yamashita R."/>
            <person name="Nakai K."/>
            <person name="Yada T."/>
            <person name="Nakamura Y."/>
            <person name="Ohara O."/>
            <person name="Isogai T."/>
            <person name="Sugano S."/>
        </authorList>
    </citation>
    <scope>NUCLEOTIDE SEQUENCE [LARGE SCALE MRNA] (ISOFORM 1)</scope>
    <source>
        <tissue>Brain</tissue>
    </source>
</reference>
<reference key="3">
    <citation type="journal article" date="2005" name="Nature">
        <title>The DNA sequence of the human X chromosome.</title>
        <authorList>
            <person name="Ross M.T."/>
            <person name="Grafham D.V."/>
            <person name="Coffey A.J."/>
            <person name="Scherer S."/>
            <person name="McLay K."/>
            <person name="Muzny D."/>
            <person name="Platzer M."/>
            <person name="Howell G.R."/>
            <person name="Burrows C."/>
            <person name="Bird C.P."/>
            <person name="Frankish A."/>
            <person name="Lovell F.L."/>
            <person name="Howe K.L."/>
            <person name="Ashurst J.L."/>
            <person name="Fulton R.S."/>
            <person name="Sudbrak R."/>
            <person name="Wen G."/>
            <person name="Jones M.C."/>
            <person name="Hurles M.E."/>
            <person name="Andrews T.D."/>
            <person name="Scott C.E."/>
            <person name="Searle S."/>
            <person name="Ramser J."/>
            <person name="Whittaker A."/>
            <person name="Deadman R."/>
            <person name="Carter N.P."/>
            <person name="Hunt S.E."/>
            <person name="Chen R."/>
            <person name="Cree A."/>
            <person name="Gunaratne P."/>
            <person name="Havlak P."/>
            <person name="Hodgson A."/>
            <person name="Metzker M.L."/>
            <person name="Richards S."/>
            <person name="Scott G."/>
            <person name="Steffen D."/>
            <person name="Sodergren E."/>
            <person name="Wheeler D.A."/>
            <person name="Worley K.C."/>
            <person name="Ainscough R."/>
            <person name="Ambrose K.D."/>
            <person name="Ansari-Lari M.A."/>
            <person name="Aradhya S."/>
            <person name="Ashwell R.I."/>
            <person name="Babbage A.K."/>
            <person name="Bagguley C.L."/>
            <person name="Ballabio A."/>
            <person name="Banerjee R."/>
            <person name="Barker G.E."/>
            <person name="Barlow K.F."/>
            <person name="Barrett I.P."/>
            <person name="Bates K.N."/>
            <person name="Beare D.M."/>
            <person name="Beasley H."/>
            <person name="Beasley O."/>
            <person name="Beck A."/>
            <person name="Bethel G."/>
            <person name="Blechschmidt K."/>
            <person name="Brady N."/>
            <person name="Bray-Allen S."/>
            <person name="Bridgeman A.M."/>
            <person name="Brown A.J."/>
            <person name="Brown M.J."/>
            <person name="Bonnin D."/>
            <person name="Bruford E.A."/>
            <person name="Buhay C."/>
            <person name="Burch P."/>
            <person name="Burford D."/>
            <person name="Burgess J."/>
            <person name="Burrill W."/>
            <person name="Burton J."/>
            <person name="Bye J.M."/>
            <person name="Carder C."/>
            <person name="Carrel L."/>
            <person name="Chako J."/>
            <person name="Chapman J.C."/>
            <person name="Chavez D."/>
            <person name="Chen E."/>
            <person name="Chen G."/>
            <person name="Chen Y."/>
            <person name="Chen Z."/>
            <person name="Chinault C."/>
            <person name="Ciccodicola A."/>
            <person name="Clark S.Y."/>
            <person name="Clarke G."/>
            <person name="Clee C.M."/>
            <person name="Clegg S."/>
            <person name="Clerc-Blankenburg K."/>
            <person name="Clifford K."/>
            <person name="Cobley V."/>
            <person name="Cole C.G."/>
            <person name="Conquer J.S."/>
            <person name="Corby N."/>
            <person name="Connor R.E."/>
            <person name="David R."/>
            <person name="Davies J."/>
            <person name="Davis C."/>
            <person name="Davis J."/>
            <person name="Delgado O."/>
            <person name="Deshazo D."/>
            <person name="Dhami P."/>
            <person name="Ding Y."/>
            <person name="Dinh H."/>
            <person name="Dodsworth S."/>
            <person name="Draper H."/>
            <person name="Dugan-Rocha S."/>
            <person name="Dunham A."/>
            <person name="Dunn M."/>
            <person name="Durbin K.J."/>
            <person name="Dutta I."/>
            <person name="Eades T."/>
            <person name="Ellwood M."/>
            <person name="Emery-Cohen A."/>
            <person name="Errington H."/>
            <person name="Evans K.L."/>
            <person name="Faulkner L."/>
            <person name="Francis F."/>
            <person name="Frankland J."/>
            <person name="Fraser A.E."/>
            <person name="Galgoczy P."/>
            <person name="Gilbert J."/>
            <person name="Gill R."/>
            <person name="Gloeckner G."/>
            <person name="Gregory S.G."/>
            <person name="Gribble S."/>
            <person name="Griffiths C."/>
            <person name="Grocock R."/>
            <person name="Gu Y."/>
            <person name="Gwilliam R."/>
            <person name="Hamilton C."/>
            <person name="Hart E.A."/>
            <person name="Hawes A."/>
            <person name="Heath P.D."/>
            <person name="Heitmann K."/>
            <person name="Hennig S."/>
            <person name="Hernandez J."/>
            <person name="Hinzmann B."/>
            <person name="Ho S."/>
            <person name="Hoffs M."/>
            <person name="Howden P.J."/>
            <person name="Huckle E.J."/>
            <person name="Hume J."/>
            <person name="Hunt P.J."/>
            <person name="Hunt A.R."/>
            <person name="Isherwood J."/>
            <person name="Jacob L."/>
            <person name="Johnson D."/>
            <person name="Jones S."/>
            <person name="de Jong P.J."/>
            <person name="Joseph S.S."/>
            <person name="Keenan S."/>
            <person name="Kelly S."/>
            <person name="Kershaw J.K."/>
            <person name="Khan Z."/>
            <person name="Kioschis P."/>
            <person name="Klages S."/>
            <person name="Knights A.J."/>
            <person name="Kosiura A."/>
            <person name="Kovar-Smith C."/>
            <person name="Laird G.K."/>
            <person name="Langford C."/>
            <person name="Lawlor S."/>
            <person name="Leversha M."/>
            <person name="Lewis L."/>
            <person name="Liu W."/>
            <person name="Lloyd C."/>
            <person name="Lloyd D.M."/>
            <person name="Loulseged H."/>
            <person name="Loveland J.E."/>
            <person name="Lovell J.D."/>
            <person name="Lozado R."/>
            <person name="Lu J."/>
            <person name="Lyne R."/>
            <person name="Ma J."/>
            <person name="Maheshwari M."/>
            <person name="Matthews L.H."/>
            <person name="McDowall J."/>
            <person name="McLaren S."/>
            <person name="McMurray A."/>
            <person name="Meidl P."/>
            <person name="Meitinger T."/>
            <person name="Milne S."/>
            <person name="Miner G."/>
            <person name="Mistry S.L."/>
            <person name="Morgan M."/>
            <person name="Morris S."/>
            <person name="Mueller I."/>
            <person name="Mullikin J.C."/>
            <person name="Nguyen N."/>
            <person name="Nordsiek G."/>
            <person name="Nyakatura G."/>
            <person name="O'dell C.N."/>
            <person name="Okwuonu G."/>
            <person name="Palmer S."/>
            <person name="Pandian R."/>
            <person name="Parker D."/>
            <person name="Parrish J."/>
            <person name="Pasternak S."/>
            <person name="Patel D."/>
            <person name="Pearce A.V."/>
            <person name="Pearson D.M."/>
            <person name="Pelan S.E."/>
            <person name="Perez L."/>
            <person name="Porter K.M."/>
            <person name="Ramsey Y."/>
            <person name="Reichwald K."/>
            <person name="Rhodes S."/>
            <person name="Ridler K.A."/>
            <person name="Schlessinger D."/>
            <person name="Schueler M.G."/>
            <person name="Sehra H.K."/>
            <person name="Shaw-Smith C."/>
            <person name="Shen H."/>
            <person name="Sheridan E.M."/>
            <person name="Shownkeen R."/>
            <person name="Skuce C.D."/>
            <person name="Smith M.L."/>
            <person name="Sotheran E.C."/>
            <person name="Steingruber H.E."/>
            <person name="Steward C.A."/>
            <person name="Storey R."/>
            <person name="Swann R.M."/>
            <person name="Swarbreck D."/>
            <person name="Tabor P.E."/>
            <person name="Taudien S."/>
            <person name="Taylor T."/>
            <person name="Teague B."/>
            <person name="Thomas K."/>
            <person name="Thorpe A."/>
            <person name="Timms K."/>
            <person name="Tracey A."/>
            <person name="Trevanion S."/>
            <person name="Tromans A.C."/>
            <person name="d'Urso M."/>
            <person name="Verduzco D."/>
            <person name="Villasana D."/>
            <person name="Waldron L."/>
            <person name="Wall M."/>
            <person name="Wang Q."/>
            <person name="Warren J."/>
            <person name="Warry G.L."/>
            <person name="Wei X."/>
            <person name="West A."/>
            <person name="Whitehead S.L."/>
            <person name="Whiteley M.N."/>
            <person name="Wilkinson J.E."/>
            <person name="Willey D.L."/>
            <person name="Williams G."/>
            <person name="Williams L."/>
            <person name="Williamson A."/>
            <person name="Williamson H."/>
            <person name="Wilming L."/>
            <person name="Woodmansey R.L."/>
            <person name="Wray P.W."/>
            <person name="Yen J."/>
            <person name="Zhang J."/>
            <person name="Zhou J."/>
            <person name="Zoghbi H."/>
            <person name="Zorilla S."/>
            <person name="Buck D."/>
            <person name="Reinhardt R."/>
            <person name="Poustka A."/>
            <person name="Rosenthal A."/>
            <person name="Lehrach H."/>
            <person name="Meindl A."/>
            <person name="Minx P.J."/>
            <person name="Hillier L.W."/>
            <person name="Willard H.F."/>
            <person name="Wilson R.K."/>
            <person name="Waterston R.H."/>
            <person name="Rice C.M."/>
            <person name="Vaudin M."/>
            <person name="Coulson A."/>
            <person name="Nelson D.L."/>
            <person name="Weinstock G."/>
            <person name="Sulston J.E."/>
            <person name="Durbin R.M."/>
            <person name="Hubbard T."/>
            <person name="Gibbs R.A."/>
            <person name="Beck S."/>
            <person name="Rogers J."/>
            <person name="Bentley D.R."/>
        </authorList>
    </citation>
    <scope>NUCLEOTIDE SEQUENCE [LARGE SCALE GENOMIC DNA]</scope>
</reference>
<reference key="4">
    <citation type="submission" date="2005-09" db="EMBL/GenBank/DDBJ databases">
        <authorList>
            <person name="Mural R.J."/>
            <person name="Istrail S."/>
            <person name="Sutton G.G."/>
            <person name="Florea L."/>
            <person name="Halpern A.L."/>
            <person name="Mobarry C.M."/>
            <person name="Lippert R."/>
            <person name="Walenz B."/>
            <person name="Shatkay H."/>
            <person name="Dew I."/>
            <person name="Miller J.R."/>
            <person name="Flanigan M.J."/>
            <person name="Edwards N.J."/>
            <person name="Bolanos R."/>
            <person name="Fasulo D."/>
            <person name="Halldorsson B.V."/>
            <person name="Hannenhalli S."/>
            <person name="Turner R."/>
            <person name="Yooseph S."/>
            <person name="Lu F."/>
            <person name="Nusskern D.R."/>
            <person name="Shue B.C."/>
            <person name="Zheng X.H."/>
            <person name="Zhong F."/>
            <person name="Delcher A.L."/>
            <person name="Huson D.H."/>
            <person name="Kravitz S.A."/>
            <person name="Mouchard L."/>
            <person name="Reinert K."/>
            <person name="Remington K.A."/>
            <person name="Clark A.G."/>
            <person name="Waterman M.S."/>
            <person name="Eichler E.E."/>
            <person name="Adams M.D."/>
            <person name="Hunkapiller M.W."/>
            <person name="Myers E.W."/>
            <person name="Venter J.C."/>
        </authorList>
    </citation>
    <scope>NUCLEOTIDE SEQUENCE [LARGE SCALE GENOMIC DNA]</scope>
</reference>
<reference key="5">
    <citation type="journal article" date="2004" name="Genome Res.">
        <title>The status, quality, and expansion of the NIH full-length cDNA project: the Mammalian Gene Collection (MGC).</title>
        <authorList>
            <consortium name="The MGC Project Team"/>
        </authorList>
    </citation>
    <scope>NUCLEOTIDE SEQUENCE [LARGE SCALE MRNA] (ISOFORM 2)</scope>
    <scope>NUCLEOTIDE SEQUENCE [LARGE SCALE MRNA] OF 535-769 (ISOFORM 1)</scope>
    <source>
        <tissue>Brain</tissue>
    </source>
</reference>
<reference key="6">
    <citation type="journal article" date="2000" name="DNA Res.">
        <title>Prediction of the coding sequences of unidentified human genes. XVII. The complete sequences of 100 new cDNA clones from brain which code for large proteins in vitro.</title>
        <authorList>
            <person name="Nagase T."/>
            <person name="Kikuno R."/>
            <person name="Ishikawa K."/>
            <person name="Hirosawa M."/>
            <person name="Ohara O."/>
        </authorList>
    </citation>
    <scope>NUCLEOTIDE SEQUENCE [LARGE SCALE MRNA] OF 132-547 (ISOFORM 1/2)</scope>
    <source>
        <tissue>Brain</tissue>
    </source>
</reference>
<reference key="7">
    <citation type="journal article" date="2004" name="Int. J. Mol. Med.">
        <title>Identification and characterization of human PDZRN4L gene and mouse Pdzrn4l gene in silico.</title>
        <authorList>
            <person name="Katoh M."/>
            <person name="Katoh M."/>
        </authorList>
    </citation>
    <scope>IDENTIFICATION</scope>
</reference>
<reference key="8">
    <citation type="journal article" date="2011" name="Sci. Signal.">
        <title>System-wide temporal characterization of the proteome and phosphoproteome of human embryonic stem cell differentiation.</title>
        <authorList>
            <person name="Rigbolt K.T."/>
            <person name="Prokhorova T.A."/>
            <person name="Akimov V."/>
            <person name="Henningsen J."/>
            <person name="Johansen P.T."/>
            <person name="Kratchmarova I."/>
            <person name="Kassem M."/>
            <person name="Mann M."/>
            <person name="Olsen J.V."/>
            <person name="Blagoev B."/>
        </authorList>
    </citation>
    <scope>PHOSPHORYLATION [LARGE SCALE ANALYSIS] AT SER-236 AND SER-454</scope>
    <scope>IDENTIFICATION BY MASS SPECTROMETRY [LARGE SCALE ANALYSIS]</scope>
</reference>
<reference key="9">
    <citation type="journal article" date="2006" name="Science">
        <title>The consensus coding sequences of human breast and colorectal cancers.</title>
        <authorList>
            <person name="Sjoeblom T."/>
            <person name="Jones S."/>
            <person name="Wood L.D."/>
            <person name="Parsons D.W."/>
            <person name="Lin J."/>
            <person name="Barber T.D."/>
            <person name="Mandelker D."/>
            <person name="Leary R.J."/>
            <person name="Ptak J."/>
            <person name="Silliman N."/>
            <person name="Szabo S."/>
            <person name="Buckhaults P."/>
            <person name="Farrell C."/>
            <person name="Meeh P."/>
            <person name="Markowitz S.D."/>
            <person name="Willis J."/>
            <person name="Dawson D."/>
            <person name="Willson J.K.V."/>
            <person name="Gazdar A.F."/>
            <person name="Hartigan J."/>
            <person name="Wu L."/>
            <person name="Liu C."/>
            <person name="Parmigiani G."/>
            <person name="Park B.H."/>
            <person name="Bachman K.E."/>
            <person name="Papadopoulos N."/>
            <person name="Vogelstein B."/>
            <person name="Kinzler K.W."/>
            <person name="Velculescu V.E."/>
        </authorList>
    </citation>
    <scope>VARIANT [LARGE SCALE ANALYSIS] CYS-39</scope>
</reference>
<feature type="chain" id="PRO_0000055921" description="PDZ domain-containing protein 4">
    <location>
        <begin position="1"/>
        <end position="769"/>
    </location>
</feature>
<feature type="domain" description="PDZ" evidence="2">
    <location>
        <begin position="130"/>
        <end position="214"/>
    </location>
</feature>
<feature type="region of interest" description="Disordered" evidence="3">
    <location>
        <begin position="221"/>
        <end position="315"/>
    </location>
</feature>
<feature type="region of interest" description="Disordered" evidence="3">
    <location>
        <begin position="445"/>
        <end position="579"/>
    </location>
</feature>
<feature type="coiled-coil region" evidence="1">
    <location>
        <begin position="389"/>
        <end position="419"/>
    </location>
</feature>
<feature type="compositionally biased region" description="Acidic residues" evidence="3">
    <location>
        <begin position="229"/>
        <end position="239"/>
    </location>
</feature>
<feature type="compositionally biased region" description="Basic and acidic residues" evidence="3">
    <location>
        <begin position="282"/>
        <end position="298"/>
    </location>
</feature>
<feature type="compositionally biased region" description="Basic and acidic residues" evidence="3">
    <location>
        <begin position="447"/>
        <end position="467"/>
    </location>
</feature>
<feature type="compositionally biased region" description="Polar residues" evidence="3">
    <location>
        <begin position="468"/>
        <end position="479"/>
    </location>
</feature>
<feature type="compositionally biased region" description="Basic and acidic residues" evidence="3">
    <location>
        <begin position="530"/>
        <end position="547"/>
    </location>
</feature>
<feature type="modified residue" description="Phosphoserine" evidence="8">
    <location>
        <position position="236"/>
    </location>
</feature>
<feature type="modified residue" description="Phosphoserine" evidence="8">
    <location>
        <position position="454"/>
    </location>
</feature>
<feature type="splice variant" id="VSP_054521" description="In isoform 2." evidence="6">
    <location>
        <begin position="21"/>
        <end position="129"/>
    </location>
</feature>
<feature type="sequence variant" id="VAR_035952" description="In a breast cancer sample; somatic mutation; dbSNP:rs782272149." evidence="5">
    <original>R</original>
    <variation>C</variation>
    <location>
        <position position="39"/>
    </location>
</feature>
<feature type="sequence conflict" description="In Ref. 2; BAC03666." evidence="7" ref="2">
    <original>G</original>
    <variation>D</variation>
    <location>
        <position position="374"/>
    </location>
</feature>
<gene>
    <name type="primary">PDZD4</name>
    <name type="synonym">KIAA1444</name>
    <name type="synonym">PDZK4</name>
    <name type="synonym">PDZRN4L</name>
</gene>
<keyword id="KW-0025">Alternative splicing</keyword>
<keyword id="KW-0175">Coiled coil</keyword>
<keyword id="KW-0963">Cytoplasm</keyword>
<keyword id="KW-0597">Phosphoprotein</keyword>
<keyword id="KW-1267">Proteomics identification</keyword>
<keyword id="KW-1185">Reference proteome</keyword>
<sequence length="769" mass="86171">MGCNMCVVQKPEEQYKVMLQVNGKELSKLSQEQTLQALRSSKEPLVIQVLRRSPRLRGDSSCHDLQLVDSGTQTDITFEHIMALGKLRPPTPPMVILEPPPISHEYYDPAEFMEGGPQEADRLDELEYEEVELYKSSHRDKLGLMVCYRTDDEEDLGIYVGEVNPNSIAAKDGRIREGDRIIQINGVDVQNREEAVAILSQEENTNISLLVARPESQLAKRWKDSDRDDFLDDFGSENEGELRARKLKSPPAQQPGNEEEKGAPDAGPGLSNSQELDSGVGRTDESTRNEESSEHDLLGDEPPSSTNTPGSLRKFGLQGDALQSRDFHFSMDSLLAEGAGLGGGDVPGLTDEEYERYRELLEIKCHLENGNQLGLLFPRASGGNSALDVNRNESLGHEMAMLEEELRHLEFKCRNILRAQKMQQLRERCMKAWLLEEESLYDLAASEPKKHELSDISELPEKSDKDSTSAYNTGESCRSTPLLVEPLPESPLRRAMAGNSNLNRTPPGPAVATPAKAAPPPGSPAKFRSLSRDPEAGRRQHAEERGRRNPKTGLTLERVGPESSPYLSRRHRGQGQEGEHYHSCVQLAPTRGLEELGHGPLSLAGGPRVGGVAAAATEAPRMEWKVKVRSDGTRYVAKRPVRDRLLKARALKIREERSGMTTDDDAVSEMKMGRYWSKEERKQHLIRAREQRKRREFMMQSRLECLREQQNGDSKPELNIIALSHRKTMKKRNKKILDNWITIQEMLAHGARSADGKRVYNPLLSVTTV</sequence>
<evidence type="ECO:0000255" key="1"/>
<evidence type="ECO:0000255" key="2">
    <source>
        <dbReference type="PROSITE-ProRule" id="PRU00143"/>
    </source>
</evidence>
<evidence type="ECO:0000256" key="3">
    <source>
        <dbReference type="SAM" id="MobiDB-lite"/>
    </source>
</evidence>
<evidence type="ECO:0000269" key="4">
    <source>
    </source>
</evidence>
<evidence type="ECO:0000269" key="5">
    <source>
    </source>
</evidence>
<evidence type="ECO:0000303" key="6">
    <source>
    </source>
</evidence>
<evidence type="ECO:0000305" key="7"/>
<evidence type="ECO:0007744" key="8">
    <source>
    </source>
</evidence>
<proteinExistence type="evidence at protein level"/>